<evidence type="ECO:0000255" key="1">
    <source>
        <dbReference type="HAMAP-Rule" id="MF_01006"/>
    </source>
</evidence>
<dbReference type="EC" id="3.6.1.27" evidence="1"/>
<dbReference type="EMBL" id="AP007255">
    <property type="protein sequence ID" value="BAE49327.1"/>
    <property type="molecule type" value="Genomic_DNA"/>
</dbReference>
<dbReference type="RefSeq" id="WP_011382966.1">
    <property type="nucleotide sequence ID" value="NC_007626.1"/>
</dbReference>
<dbReference type="SMR" id="Q2W9Z8"/>
<dbReference type="STRING" id="342108.amb0523"/>
<dbReference type="KEGG" id="mag:amb0523"/>
<dbReference type="HOGENOM" id="CLU_060296_1_0_5"/>
<dbReference type="OrthoDB" id="9808289at2"/>
<dbReference type="Proteomes" id="UP000007058">
    <property type="component" value="Chromosome"/>
</dbReference>
<dbReference type="GO" id="GO:0005886">
    <property type="term" value="C:plasma membrane"/>
    <property type="evidence" value="ECO:0007669"/>
    <property type="project" value="UniProtKB-SubCell"/>
</dbReference>
<dbReference type="GO" id="GO:0050380">
    <property type="term" value="F:undecaprenyl-diphosphatase activity"/>
    <property type="evidence" value="ECO:0007669"/>
    <property type="project" value="UniProtKB-UniRule"/>
</dbReference>
<dbReference type="GO" id="GO:0071555">
    <property type="term" value="P:cell wall organization"/>
    <property type="evidence" value="ECO:0007669"/>
    <property type="project" value="UniProtKB-KW"/>
</dbReference>
<dbReference type="GO" id="GO:0009252">
    <property type="term" value="P:peptidoglycan biosynthetic process"/>
    <property type="evidence" value="ECO:0007669"/>
    <property type="project" value="UniProtKB-KW"/>
</dbReference>
<dbReference type="GO" id="GO:0008360">
    <property type="term" value="P:regulation of cell shape"/>
    <property type="evidence" value="ECO:0007669"/>
    <property type="project" value="UniProtKB-KW"/>
</dbReference>
<dbReference type="GO" id="GO:0046677">
    <property type="term" value="P:response to antibiotic"/>
    <property type="evidence" value="ECO:0007669"/>
    <property type="project" value="UniProtKB-UniRule"/>
</dbReference>
<dbReference type="HAMAP" id="MF_01006">
    <property type="entry name" value="Undec_diphosphatase"/>
    <property type="match status" value="1"/>
</dbReference>
<dbReference type="InterPro" id="IPR003824">
    <property type="entry name" value="UppP"/>
</dbReference>
<dbReference type="PANTHER" id="PTHR30622">
    <property type="entry name" value="UNDECAPRENYL-DIPHOSPHATASE"/>
    <property type="match status" value="1"/>
</dbReference>
<dbReference type="PANTHER" id="PTHR30622:SF4">
    <property type="entry name" value="UNDECAPRENYL-DIPHOSPHATASE"/>
    <property type="match status" value="1"/>
</dbReference>
<dbReference type="Pfam" id="PF02673">
    <property type="entry name" value="BacA"/>
    <property type="match status" value="1"/>
</dbReference>
<protein>
    <recommendedName>
        <fullName evidence="1">Undecaprenyl-diphosphatase 1</fullName>
        <ecNumber evidence="1">3.6.1.27</ecNumber>
    </recommendedName>
    <alternativeName>
        <fullName evidence="1">Bacitracin resistance protein 1</fullName>
    </alternativeName>
    <alternativeName>
        <fullName evidence="1">Undecaprenyl pyrophosphate phosphatase 1</fullName>
    </alternativeName>
</protein>
<keyword id="KW-0046">Antibiotic resistance</keyword>
<keyword id="KW-0997">Cell inner membrane</keyword>
<keyword id="KW-1003">Cell membrane</keyword>
<keyword id="KW-0133">Cell shape</keyword>
<keyword id="KW-0961">Cell wall biogenesis/degradation</keyword>
<keyword id="KW-0378">Hydrolase</keyword>
<keyword id="KW-0472">Membrane</keyword>
<keyword id="KW-0573">Peptidoglycan synthesis</keyword>
<keyword id="KW-0812">Transmembrane</keyword>
<keyword id="KW-1133">Transmembrane helix</keyword>
<feature type="chain" id="PRO_0000250242" description="Undecaprenyl-diphosphatase 1">
    <location>
        <begin position="1"/>
        <end position="267"/>
    </location>
</feature>
<feature type="transmembrane region" description="Helical" evidence="1">
    <location>
        <begin position="6"/>
        <end position="26"/>
    </location>
</feature>
<feature type="transmembrane region" description="Helical" evidence="1">
    <location>
        <begin position="41"/>
        <end position="60"/>
    </location>
</feature>
<feature type="transmembrane region" description="Helical" evidence="1">
    <location>
        <begin position="83"/>
        <end position="103"/>
    </location>
</feature>
<feature type="transmembrane region" description="Helical" evidence="1">
    <location>
        <begin position="109"/>
        <end position="129"/>
    </location>
</feature>
<feature type="transmembrane region" description="Helical" evidence="1">
    <location>
        <begin position="142"/>
        <end position="162"/>
    </location>
</feature>
<feature type="transmembrane region" description="Helical" evidence="1">
    <location>
        <begin position="185"/>
        <end position="205"/>
    </location>
</feature>
<feature type="transmembrane region" description="Helical" evidence="1">
    <location>
        <begin position="217"/>
        <end position="237"/>
    </location>
</feature>
<feature type="transmembrane region" description="Helical" evidence="1">
    <location>
        <begin position="244"/>
        <end position="264"/>
    </location>
</feature>
<proteinExistence type="inferred from homology"/>
<reference key="1">
    <citation type="journal article" date="2005" name="DNA Res.">
        <title>Complete genome sequence of the facultative anaerobic magnetotactic bacterium Magnetospirillum sp. strain AMB-1.</title>
        <authorList>
            <person name="Matsunaga T."/>
            <person name="Okamura Y."/>
            <person name="Fukuda Y."/>
            <person name="Wahyudi A.T."/>
            <person name="Murase Y."/>
            <person name="Takeyama H."/>
        </authorList>
    </citation>
    <scope>NUCLEOTIDE SEQUENCE [LARGE SCALE GENOMIC DNA]</scope>
    <source>
        <strain>ATCC 700264 / AMB-1</strain>
    </source>
</reference>
<accession>Q2W9Z8</accession>
<gene>
    <name evidence="1" type="primary">uppP1</name>
    <name type="ordered locus">amb0523</name>
</gene>
<comment type="function">
    <text evidence="1">Catalyzes the dephosphorylation of undecaprenyl diphosphate (UPP). Confers resistance to bacitracin.</text>
</comment>
<comment type="catalytic activity">
    <reaction evidence="1">
        <text>di-trans,octa-cis-undecaprenyl diphosphate + H2O = di-trans,octa-cis-undecaprenyl phosphate + phosphate + H(+)</text>
        <dbReference type="Rhea" id="RHEA:28094"/>
        <dbReference type="ChEBI" id="CHEBI:15377"/>
        <dbReference type="ChEBI" id="CHEBI:15378"/>
        <dbReference type="ChEBI" id="CHEBI:43474"/>
        <dbReference type="ChEBI" id="CHEBI:58405"/>
        <dbReference type="ChEBI" id="CHEBI:60392"/>
        <dbReference type="EC" id="3.6.1.27"/>
    </reaction>
</comment>
<comment type="subcellular location">
    <subcellularLocation>
        <location evidence="1">Cell inner membrane</location>
        <topology evidence="1">Multi-pass membrane protein</topology>
    </subcellularLocation>
</comment>
<comment type="miscellaneous">
    <text>Bacitracin is thought to be involved in the inhibition of peptidoglycan synthesis by sequestering undecaprenyl diphosphate, thereby reducing the pool of lipid carrier available.</text>
</comment>
<comment type="similarity">
    <text evidence="1">Belongs to the UppP family.</text>
</comment>
<organism>
    <name type="scientific">Paramagnetospirillum magneticum (strain ATCC 700264 / AMB-1)</name>
    <name type="common">Magnetospirillum magneticum</name>
    <dbReference type="NCBI Taxonomy" id="342108"/>
    <lineage>
        <taxon>Bacteria</taxon>
        <taxon>Pseudomonadati</taxon>
        <taxon>Pseudomonadota</taxon>
        <taxon>Alphaproteobacteria</taxon>
        <taxon>Rhodospirillales</taxon>
        <taxon>Magnetospirillaceae</taxon>
        <taxon>Paramagnetospirillum</taxon>
    </lineage>
</organism>
<sequence>MTFLEVLVVALIQGLGEVLPFGAAGLLAALPHLAAKPEGRAALSVAAHAGILLALMIYFWRDVLAMAVGLWRLAKGKPDYGSHLLLHVLAGTIPAAIVGWLVLDRASTLVGQSGAAIILILGGVLLWGCDKLGVTVRRVEHMSWVGAAGLGALQILSLVPGVSRTGITVTVARLLGWERQAAVRFSMLLAMPLILGHGVKTFWGLAHHTELVFSSDLLMAMATAGLAALIGLAGMMAWVARNTFVPFAILRIGFGIAVLGLVYFGQA</sequence>
<name>UPPP1_PARM1</name>